<proteinExistence type="evidence at transcript level"/>
<feature type="signal peptide" evidence="2">
    <location>
        <begin position="1"/>
        <end position="23"/>
    </location>
</feature>
<feature type="chain" id="PRO_0000355289" description="Snaclec 1">
    <location>
        <begin position="24"/>
        <end position="146"/>
    </location>
</feature>
<feature type="domain" description="C-type lectin" evidence="3">
    <location>
        <begin position="32"/>
        <end position="143"/>
    </location>
</feature>
<feature type="disulfide bond" evidence="3">
    <location>
        <begin position="25"/>
        <end position="36"/>
    </location>
</feature>
<feature type="disulfide bond" evidence="3">
    <location>
        <begin position="53"/>
        <end position="142"/>
    </location>
</feature>
<feature type="disulfide bond" description="Interchain" evidence="3">
    <location>
        <position position="98"/>
    </location>
</feature>
<feature type="disulfide bond" evidence="3">
    <location>
        <begin position="119"/>
        <end position="134"/>
    </location>
</feature>
<dbReference type="EMBL" id="DQ464256">
    <property type="protein sequence ID" value="ABG26985.1"/>
    <property type="molecule type" value="mRNA"/>
</dbReference>
<dbReference type="SMR" id="B0VXV0"/>
<dbReference type="GO" id="GO:0005576">
    <property type="term" value="C:extracellular region"/>
    <property type="evidence" value="ECO:0007669"/>
    <property type="project" value="UniProtKB-SubCell"/>
</dbReference>
<dbReference type="GO" id="GO:0090729">
    <property type="term" value="F:toxin activity"/>
    <property type="evidence" value="ECO:0007669"/>
    <property type="project" value="UniProtKB-KW"/>
</dbReference>
<dbReference type="FunFam" id="3.10.100.10:FF:000087">
    <property type="entry name" value="Snaclec rhodocetin subunit delta"/>
    <property type="match status" value="1"/>
</dbReference>
<dbReference type="Gene3D" id="3.10.100.10">
    <property type="entry name" value="Mannose-Binding Protein A, subunit A"/>
    <property type="match status" value="1"/>
</dbReference>
<dbReference type="InterPro" id="IPR001304">
    <property type="entry name" value="C-type_lectin-like"/>
</dbReference>
<dbReference type="InterPro" id="IPR016186">
    <property type="entry name" value="C-type_lectin-like/link_sf"/>
</dbReference>
<dbReference type="InterPro" id="IPR050111">
    <property type="entry name" value="C-type_lectin/snaclec_domain"/>
</dbReference>
<dbReference type="InterPro" id="IPR018378">
    <property type="entry name" value="C-type_lectin_CS"/>
</dbReference>
<dbReference type="InterPro" id="IPR016187">
    <property type="entry name" value="CTDL_fold"/>
</dbReference>
<dbReference type="PANTHER" id="PTHR22803">
    <property type="entry name" value="MANNOSE, PHOSPHOLIPASE, LECTIN RECEPTOR RELATED"/>
    <property type="match status" value="1"/>
</dbReference>
<dbReference type="Pfam" id="PF00059">
    <property type="entry name" value="Lectin_C"/>
    <property type="match status" value="1"/>
</dbReference>
<dbReference type="SMART" id="SM00034">
    <property type="entry name" value="CLECT"/>
    <property type="match status" value="1"/>
</dbReference>
<dbReference type="SUPFAM" id="SSF56436">
    <property type="entry name" value="C-type lectin-like"/>
    <property type="match status" value="1"/>
</dbReference>
<dbReference type="PROSITE" id="PS00615">
    <property type="entry name" value="C_TYPE_LECTIN_1"/>
    <property type="match status" value="1"/>
</dbReference>
<dbReference type="PROSITE" id="PS50041">
    <property type="entry name" value="C_TYPE_LECTIN_2"/>
    <property type="match status" value="1"/>
</dbReference>
<name>SL1_SISCA</name>
<keyword id="KW-1015">Disulfide bond</keyword>
<keyword id="KW-1199">Hemostasis impairing toxin</keyword>
<keyword id="KW-0964">Secreted</keyword>
<keyword id="KW-0732">Signal</keyword>
<keyword id="KW-0800">Toxin</keyword>
<organism>
    <name type="scientific">Sistrurus catenatus edwardsii</name>
    <name type="common">Desert massasauga</name>
    <name type="synonym">Crotalophorus edwardsii</name>
    <dbReference type="NCBI Taxonomy" id="8762"/>
    <lineage>
        <taxon>Eukaryota</taxon>
        <taxon>Metazoa</taxon>
        <taxon>Chordata</taxon>
        <taxon>Craniata</taxon>
        <taxon>Vertebrata</taxon>
        <taxon>Euteleostomi</taxon>
        <taxon>Lepidosauria</taxon>
        <taxon>Squamata</taxon>
        <taxon>Bifurcata</taxon>
        <taxon>Unidentata</taxon>
        <taxon>Episquamata</taxon>
        <taxon>Toxicofera</taxon>
        <taxon>Serpentes</taxon>
        <taxon>Colubroidea</taxon>
        <taxon>Viperidae</taxon>
        <taxon>Crotalinae</taxon>
        <taxon>Sistrurus</taxon>
    </lineage>
</organism>
<sequence length="146" mass="17054">MGRFIFMSFGLLVVFLSLSGTGADCPSDWSSYEGHCYRVFQQEMTWEAAEQFCAQQRKESHLVSFHSSEEVDFLVSITYPILKADLVWIGLRDIWNECRLEWTDGTKVDYKEWSEEPECIVSKTTDNQWISRPCSRTYSFVCKFQA</sequence>
<accession>B0VXV0</accession>
<reference key="1">
    <citation type="journal article" date="2007" name="BMC Mol. Biol.">
        <title>The venom gland transcriptome of the Desert Massasauga rattlesnake (Sistrurus catenatus edwardsii): towards an understanding of venom composition among advanced snakes (Superfamily Colubroidea).</title>
        <authorList>
            <person name="Pahari S."/>
            <person name="Mackessy S.P."/>
            <person name="Kini R.M."/>
        </authorList>
    </citation>
    <scope>NUCLEOTIDE SEQUENCE [LARGE SCALE MRNA]</scope>
    <source>
        <tissue>Venom gland</tissue>
    </source>
</reference>
<protein>
    <recommendedName>
        <fullName>Snaclec 1</fullName>
    </recommendedName>
    <alternativeName>
        <fullName>C-type lectin isoform 1</fullName>
    </alternativeName>
</protein>
<evidence type="ECO:0000250" key="1"/>
<evidence type="ECO:0000255" key="2"/>
<evidence type="ECO:0000255" key="3">
    <source>
        <dbReference type="PROSITE-ProRule" id="PRU00040"/>
    </source>
</evidence>
<evidence type="ECO:0000305" key="4"/>
<comment type="function">
    <text evidence="1">Interferes with one step of hemostasis (modulation of platelet aggregation, or coagulation cascade, for example).</text>
</comment>
<comment type="subunit">
    <text evidence="1">Heterodimer; disulfide-linked.</text>
</comment>
<comment type="subcellular location">
    <subcellularLocation>
        <location evidence="1">Secreted</location>
    </subcellularLocation>
</comment>
<comment type="tissue specificity">
    <text>Expressed by the venom gland.</text>
</comment>
<comment type="miscellaneous">
    <text>Shows greater sequence similarity to the beta than alpha subunits compared to other heterodimer snaclecs.</text>
</comment>
<comment type="similarity">
    <text evidence="4">Belongs to the snaclec family.</text>
</comment>